<keyword id="KW-0067">ATP-binding</keyword>
<keyword id="KW-0997">Cell inner membrane</keyword>
<keyword id="KW-1003">Cell membrane</keyword>
<keyword id="KW-0406">Ion transport</keyword>
<keyword id="KW-0460">Magnesium</keyword>
<keyword id="KW-0472">Membrane</keyword>
<keyword id="KW-0479">Metal-binding</keyword>
<keyword id="KW-0547">Nucleotide-binding</keyword>
<keyword id="KW-0597">Phosphoprotein</keyword>
<keyword id="KW-0630">Potassium</keyword>
<keyword id="KW-0633">Potassium transport</keyword>
<keyword id="KW-1278">Translocase</keyword>
<keyword id="KW-0812">Transmembrane</keyword>
<keyword id="KW-1133">Transmembrane helix</keyword>
<keyword id="KW-0813">Transport</keyword>
<name>KDPB_YERPN</name>
<feature type="chain" id="PRO_1000022451" description="Potassium-transporting ATPase ATP-binding subunit">
    <location>
        <begin position="1"/>
        <end position="688"/>
    </location>
</feature>
<feature type="transmembrane region" description="Helical" evidence="1">
    <location>
        <begin position="34"/>
        <end position="54"/>
    </location>
</feature>
<feature type="transmembrane region" description="Helical" evidence="1">
    <location>
        <begin position="62"/>
        <end position="82"/>
    </location>
</feature>
<feature type="transmembrane region" description="Helical" evidence="1">
    <location>
        <begin position="219"/>
        <end position="239"/>
    </location>
</feature>
<feature type="transmembrane region" description="Helical" evidence="1">
    <location>
        <begin position="260"/>
        <end position="280"/>
    </location>
</feature>
<feature type="transmembrane region" description="Helical" evidence="1">
    <location>
        <begin position="594"/>
        <end position="614"/>
    </location>
</feature>
<feature type="transmembrane region" description="Helical" evidence="1">
    <location>
        <begin position="622"/>
        <end position="642"/>
    </location>
</feature>
<feature type="transmembrane region" description="Helical" evidence="1">
    <location>
        <begin position="662"/>
        <end position="682"/>
    </location>
</feature>
<feature type="active site" description="4-aspartylphosphate intermediate" evidence="1">
    <location>
        <position position="313"/>
    </location>
</feature>
<feature type="binding site" evidence="1">
    <location>
        <position position="350"/>
    </location>
    <ligand>
        <name>ATP</name>
        <dbReference type="ChEBI" id="CHEBI:30616"/>
    </ligand>
</feature>
<feature type="binding site" evidence="1">
    <location>
        <position position="354"/>
    </location>
    <ligand>
        <name>ATP</name>
        <dbReference type="ChEBI" id="CHEBI:30616"/>
    </ligand>
</feature>
<feature type="binding site" evidence="1">
    <location>
        <begin position="383"/>
        <end position="390"/>
    </location>
    <ligand>
        <name>ATP</name>
        <dbReference type="ChEBI" id="CHEBI:30616"/>
    </ligand>
</feature>
<feature type="binding site" evidence="1">
    <location>
        <position position="401"/>
    </location>
    <ligand>
        <name>ATP</name>
        <dbReference type="ChEBI" id="CHEBI:30616"/>
    </ligand>
</feature>
<feature type="binding site" evidence="1">
    <location>
        <position position="524"/>
    </location>
    <ligand>
        <name>Mg(2+)</name>
        <dbReference type="ChEBI" id="CHEBI:18420"/>
    </ligand>
</feature>
<feature type="binding site" evidence="1">
    <location>
        <position position="528"/>
    </location>
    <ligand>
        <name>Mg(2+)</name>
        <dbReference type="ChEBI" id="CHEBI:18420"/>
    </ligand>
</feature>
<sequence length="688" mass="72962">MTHKQRAIFEPALVRTALLDAVKKLDPRVQWRNPVMFVVYLGSWLTTLIWLDILSGHTTGSAMFTGSIALWLWFTVLFANMAEALAEGRSKAQAASLRGVKKTSWAKKLSEARVDAPQEKVSADSLRKGDLVLIEAGDTVPCDGEVLEGGASVDESAITGESAPVIRESGGDFSSVTGGTRVLSDWLVVECRVNPGETFLDRMIAMVEGAKRRKTPNEVALTILLVALTIVFLLATATLYPFSVFSVEASQAGSPVTITVLVALLVCLIPTTIGGLLSAIGVAGMSRMLGANVIATSGRAVEAAGDVDVLLLDKTGTITLGNRQASEFLPAPGVTEQQLADAAQLSSLADETPEGRSIVVLAKQRFNLRERDLHSLNATFIPFSAQTRMSGVNVQERMIRKGAVDAIRRHVESNQGHFPPAVDDLVASVARTGGTPLVVAEGSRVLGVVALKDIVKGGIKERFAELRKMGIKTVMITGDNRLTAAAIAAEAGVDDFLAEATPEAKLALIRQYQAEGRLVAMTGDGTNDAPALAQADVAVAMNSGTQAAKEAGNMVDLDSNPTKLIEVVHIGKQMLMTRGSLTTFSIANDVAKYFAIIPAAFAATYPQLNALNIMQLHSPSSAILSAVIFNALVIVFLIPLALKGVSYKAMSAAALLRRNLWIYGLGGLLVPFVGIKLIDLLLTALNMG</sequence>
<dbReference type="EC" id="7.2.2.6" evidence="1"/>
<dbReference type="EMBL" id="CP000305">
    <property type="protein sequence ID" value="ABG17508.1"/>
    <property type="molecule type" value="Genomic_DNA"/>
</dbReference>
<dbReference type="EMBL" id="ACNQ01000008">
    <property type="protein sequence ID" value="EEO77612.1"/>
    <property type="molecule type" value="Genomic_DNA"/>
</dbReference>
<dbReference type="RefSeq" id="WP_002209651.1">
    <property type="nucleotide sequence ID" value="NZ_ACNQ01000008.1"/>
</dbReference>
<dbReference type="SMR" id="Q1CKH2"/>
<dbReference type="GeneID" id="57976002"/>
<dbReference type="KEGG" id="ypn:YPN_1178"/>
<dbReference type="HOGENOM" id="CLU_025728_2_0_6"/>
<dbReference type="Proteomes" id="UP000008936">
    <property type="component" value="Chromosome"/>
</dbReference>
<dbReference type="GO" id="GO:0005886">
    <property type="term" value="C:plasma membrane"/>
    <property type="evidence" value="ECO:0007669"/>
    <property type="project" value="UniProtKB-SubCell"/>
</dbReference>
<dbReference type="GO" id="GO:0005524">
    <property type="term" value="F:ATP binding"/>
    <property type="evidence" value="ECO:0007669"/>
    <property type="project" value="UniProtKB-UniRule"/>
</dbReference>
<dbReference type="GO" id="GO:0016887">
    <property type="term" value="F:ATP hydrolysis activity"/>
    <property type="evidence" value="ECO:0007669"/>
    <property type="project" value="InterPro"/>
</dbReference>
<dbReference type="GO" id="GO:0000287">
    <property type="term" value="F:magnesium ion binding"/>
    <property type="evidence" value="ECO:0007669"/>
    <property type="project" value="UniProtKB-UniRule"/>
</dbReference>
<dbReference type="GO" id="GO:0008556">
    <property type="term" value="F:P-type potassium transmembrane transporter activity"/>
    <property type="evidence" value="ECO:0007669"/>
    <property type="project" value="UniProtKB-UniRule"/>
</dbReference>
<dbReference type="CDD" id="cd02078">
    <property type="entry name" value="P-type_ATPase_K"/>
    <property type="match status" value="1"/>
</dbReference>
<dbReference type="FunFam" id="2.70.150.10:FF:000010">
    <property type="entry name" value="Potassium-transporting ATPase ATP-binding subunit"/>
    <property type="match status" value="1"/>
</dbReference>
<dbReference type="FunFam" id="3.40.1110.10:FF:000007">
    <property type="entry name" value="Potassium-transporting ATPase ATP-binding subunit"/>
    <property type="match status" value="1"/>
</dbReference>
<dbReference type="Gene3D" id="3.40.1110.10">
    <property type="entry name" value="Calcium-transporting ATPase, cytoplasmic domain N"/>
    <property type="match status" value="1"/>
</dbReference>
<dbReference type="Gene3D" id="2.70.150.10">
    <property type="entry name" value="Calcium-transporting ATPase, cytoplasmic transduction domain A"/>
    <property type="match status" value="1"/>
</dbReference>
<dbReference type="Gene3D" id="3.40.50.1000">
    <property type="entry name" value="HAD superfamily/HAD-like"/>
    <property type="match status" value="1"/>
</dbReference>
<dbReference type="HAMAP" id="MF_00285">
    <property type="entry name" value="KdpB"/>
    <property type="match status" value="1"/>
</dbReference>
<dbReference type="InterPro" id="IPR023299">
    <property type="entry name" value="ATPase_P-typ_cyto_dom_N"/>
</dbReference>
<dbReference type="InterPro" id="IPR018303">
    <property type="entry name" value="ATPase_P-typ_P_site"/>
</dbReference>
<dbReference type="InterPro" id="IPR023298">
    <property type="entry name" value="ATPase_P-typ_TM_dom_sf"/>
</dbReference>
<dbReference type="InterPro" id="IPR008250">
    <property type="entry name" value="ATPase_P-typ_transduc_dom_A_sf"/>
</dbReference>
<dbReference type="InterPro" id="IPR036412">
    <property type="entry name" value="HAD-like_sf"/>
</dbReference>
<dbReference type="InterPro" id="IPR023214">
    <property type="entry name" value="HAD_sf"/>
</dbReference>
<dbReference type="InterPro" id="IPR006391">
    <property type="entry name" value="P-type_ATPase_bsu_IA"/>
</dbReference>
<dbReference type="InterPro" id="IPR001757">
    <property type="entry name" value="P_typ_ATPase"/>
</dbReference>
<dbReference type="InterPro" id="IPR044492">
    <property type="entry name" value="P_typ_ATPase_HD_dom"/>
</dbReference>
<dbReference type="NCBIfam" id="TIGR01494">
    <property type="entry name" value="ATPase_P-type"/>
    <property type="match status" value="2"/>
</dbReference>
<dbReference type="NCBIfam" id="TIGR01497">
    <property type="entry name" value="kdpB"/>
    <property type="match status" value="1"/>
</dbReference>
<dbReference type="PANTHER" id="PTHR43743">
    <property type="entry name" value="POTASSIUM-TRANSPORTING ATPASE ATP-BINDING SUBUNIT"/>
    <property type="match status" value="1"/>
</dbReference>
<dbReference type="PANTHER" id="PTHR43743:SF1">
    <property type="entry name" value="POTASSIUM-TRANSPORTING ATPASE ATP-BINDING SUBUNIT"/>
    <property type="match status" value="1"/>
</dbReference>
<dbReference type="Pfam" id="PF00122">
    <property type="entry name" value="E1-E2_ATPase"/>
    <property type="match status" value="1"/>
</dbReference>
<dbReference type="Pfam" id="PF00702">
    <property type="entry name" value="Hydrolase"/>
    <property type="match status" value="1"/>
</dbReference>
<dbReference type="PRINTS" id="PR00119">
    <property type="entry name" value="CATATPASE"/>
</dbReference>
<dbReference type="SFLD" id="SFLDG00002">
    <property type="entry name" value="C1.7:_P-type_atpase_like"/>
    <property type="match status" value="1"/>
</dbReference>
<dbReference type="SFLD" id="SFLDF00027">
    <property type="entry name" value="p-type_atpase"/>
    <property type="match status" value="1"/>
</dbReference>
<dbReference type="SUPFAM" id="SSF81653">
    <property type="entry name" value="Calcium ATPase, transduction domain A"/>
    <property type="match status" value="1"/>
</dbReference>
<dbReference type="SUPFAM" id="SSF81665">
    <property type="entry name" value="Calcium ATPase, transmembrane domain M"/>
    <property type="match status" value="1"/>
</dbReference>
<dbReference type="SUPFAM" id="SSF56784">
    <property type="entry name" value="HAD-like"/>
    <property type="match status" value="1"/>
</dbReference>
<dbReference type="SUPFAM" id="SSF81660">
    <property type="entry name" value="Metal cation-transporting ATPase, ATP-binding domain N"/>
    <property type="match status" value="1"/>
</dbReference>
<dbReference type="PROSITE" id="PS00154">
    <property type="entry name" value="ATPASE_E1_E2"/>
    <property type="match status" value="1"/>
</dbReference>
<comment type="function">
    <text evidence="1">Part of the high-affinity ATP-driven potassium transport (or Kdp) system, which catalyzes the hydrolysis of ATP coupled with the electrogenic transport of potassium into the cytoplasm. This subunit is responsible for energy coupling to the transport system and for the release of the potassium ions to the cytoplasm.</text>
</comment>
<comment type="catalytic activity">
    <reaction evidence="1">
        <text>K(+)(out) + ATP + H2O = K(+)(in) + ADP + phosphate + H(+)</text>
        <dbReference type="Rhea" id="RHEA:16777"/>
        <dbReference type="ChEBI" id="CHEBI:15377"/>
        <dbReference type="ChEBI" id="CHEBI:15378"/>
        <dbReference type="ChEBI" id="CHEBI:29103"/>
        <dbReference type="ChEBI" id="CHEBI:30616"/>
        <dbReference type="ChEBI" id="CHEBI:43474"/>
        <dbReference type="ChEBI" id="CHEBI:456216"/>
        <dbReference type="EC" id="7.2.2.6"/>
    </reaction>
    <physiologicalReaction direction="left-to-right" evidence="1">
        <dbReference type="Rhea" id="RHEA:16778"/>
    </physiologicalReaction>
</comment>
<comment type="subunit">
    <text evidence="1">The system is composed of three essential subunits: KdpA, KdpB and KdpC.</text>
</comment>
<comment type="subcellular location">
    <subcellularLocation>
        <location evidence="1">Cell inner membrane</location>
        <topology evidence="1">Multi-pass membrane protein</topology>
    </subcellularLocation>
</comment>
<comment type="similarity">
    <text evidence="1">Belongs to the cation transport ATPase (P-type) (TC 3.A.3) family. Type IA subfamily.</text>
</comment>
<accession>Q1CKH2</accession>
<accession>C4GRC1</accession>
<proteinExistence type="inferred from homology"/>
<reference key="1">
    <citation type="journal article" date="2006" name="J. Bacteriol.">
        <title>Complete genome sequence of Yersinia pestis strains Antiqua and Nepal516: evidence of gene reduction in an emerging pathogen.</title>
        <authorList>
            <person name="Chain P.S.G."/>
            <person name="Hu P."/>
            <person name="Malfatti S.A."/>
            <person name="Radnedge L."/>
            <person name="Larimer F."/>
            <person name="Vergez L.M."/>
            <person name="Worsham P."/>
            <person name="Chu M.C."/>
            <person name="Andersen G.L."/>
        </authorList>
    </citation>
    <scope>NUCLEOTIDE SEQUENCE [LARGE SCALE GENOMIC DNA]</scope>
    <source>
        <strain>Nepal516</strain>
    </source>
</reference>
<reference key="2">
    <citation type="submission" date="2009-04" db="EMBL/GenBank/DDBJ databases">
        <title>Yersinia pestis Nepal516A whole genome shotgun sequencing project.</title>
        <authorList>
            <person name="Plunkett G. III"/>
            <person name="Anderson B.D."/>
            <person name="Baumler D.J."/>
            <person name="Burland V."/>
            <person name="Cabot E.L."/>
            <person name="Glasner J.D."/>
            <person name="Mau B."/>
            <person name="Neeno-Eckwall E."/>
            <person name="Perna N.T."/>
            <person name="Munk A.C."/>
            <person name="Tapia R."/>
            <person name="Green L.D."/>
            <person name="Rogers Y.C."/>
            <person name="Detter J.C."/>
            <person name="Bruce D.C."/>
            <person name="Brettin T.S."/>
        </authorList>
    </citation>
    <scope>NUCLEOTIDE SEQUENCE [LARGE SCALE GENOMIC DNA]</scope>
    <source>
        <strain>Nepal516</strain>
    </source>
</reference>
<organism>
    <name type="scientific">Yersinia pestis bv. Antiqua (strain Nepal516)</name>
    <dbReference type="NCBI Taxonomy" id="377628"/>
    <lineage>
        <taxon>Bacteria</taxon>
        <taxon>Pseudomonadati</taxon>
        <taxon>Pseudomonadota</taxon>
        <taxon>Gammaproteobacteria</taxon>
        <taxon>Enterobacterales</taxon>
        <taxon>Yersiniaceae</taxon>
        <taxon>Yersinia</taxon>
    </lineage>
</organism>
<protein>
    <recommendedName>
        <fullName evidence="1">Potassium-transporting ATPase ATP-binding subunit</fullName>
        <ecNumber evidence="1">7.2.2.6</ecNumber>
    </recommendedName>
    <alternativeName>
        <fullName evidence="1">ATP phosphohydrolase [potassium-transporting] B chain</fullName>
    </alternativeName>
    <alternativeName>
        <fullName evidence="1">Potassium-binding and translocating subunit B</fullName>
    </alternativeName>
    <alternativeName>
        <fullName evidence="1">Potassium-translocating ATPase B chain</fullName>
    </alternativeName>
</protein>
<evidence type="ECO:0000255" key="1">
    <source>
        <dbReference type="HAMAP-Rule" id="MF_00285"/>
    </source>
</evidence>
<gene>
    <name evidence="1" type="primary">kdpB</name>
    <name type="ordered locus">YPN_1178</name>
    <name type="ORF">YP516_1289</name>
</gene>